<accession>Q126M3</accession>
<keyword id="KW-0413">Isomerase</keyword>
<keyword id="KW-1185">Reference proteome</keyword>
<keyword id="KW-0819">tRNA processing</keyword>
<sequence length="264" mass="29208">MRIALGISYSGSAYEGWQSQLSGNTVQDKLESALARFAAQPVRTLCAGRTDAGVHGLMQVVHFDTVLHRDMGSWVRGTNAFLPSDIAVQWAREVPDTFHCRGSAIARRYAYVVLESPVRPSVEAGRVGWVYRPLDGAAMRQAITHLVGEHDFSSFRAAQCQAKSPVKTINRIEISERAGTGSKYWHFEFEANAFLHHMIRNIMGCLVAIGQGSHEPGWLLDVMAARSRDAAAPTFSPNGLYFLGPVYEDHYGLPNRTAAYDWLP</sequence>
<gene>
    <name evidence="1" type="primary">truA</name>
    <name type="ordered locus">Bpro_3614</name>
</gene>
<name>TRUA_POLSJ</name>
<evidence type="ECO:0000255" key="1">
    <source>
        <dbReference type="HAMAP-Rule" id="MF_00171"/>
    </source>
</evidence>
<proteinExistence type="inferred from homology"/>
<protein>
    <recommendedName>
        <fullName evidence="1">tRNA pseudouridine synthase A</fullName>
        <ecNumber evidence="1">5.4.99.12</ecNumber>
    </recommendedName>
    <alternativeName>
        <fullName evidence="1">tRNA pseudouridine(38-40) synthase</fullName>
    </alternativeName>
    <alternativeName>
        <fullName evidence="1">tRNA pseudouridylate synthase I</fullName>
    </alternativeName>
    <alternativeName>
        <fullName evidence="1">tRNA-uridine isomerase I</fullName>
    </alternativeName>
</protein>
<dbReference type="EC" id="5.4.99.12" evidence="1"/>
<dbReference type="EMBL" id="CP000316">
    <property type="protein sequence ID" value="ABE45519.1"/>
    <property type="molecule type" value="Genomic_DNA"/>
</dbReference>
<dbReference type="RefSeq" id="WP_011484513.1">
    <property type="nucleotide sequence ID" value="NC_007948.1"/>
</dbReference>
<dbReference type="SMR" id="Q126M3"/>
<dbReference type="STRING" id="296591.Bpro_3614"/>
<dbReference type="KEGG" id="pol:Bpro_3614"/>
<dbReference type="eggNOG" id="COG0101">
    <property type="taxonomic scope" value="Bacteria"/>
</dbReference>
<dbReference type="HOGENOM" id="CLU_014673_0_2_4"/>
<dbReference type="OrthoDB" id="9811823at2"/>
<dbReference type="Proteomes" id="UP000001983">
    <property type="component" value="Chromosome"/>
</dbReference>
<dbReference type="GO" id="GO:0003723">
    <property type="term" value="F:RNA binding"/>
    <property type="evidence" value="ECO:0007669"/>
    <property type="project" value="InterPro"/>
</dbReference>
<dbReference type="GO" id="GO:0160147">
    <property type="term" value="F:tRNA pseudouridine(38-40) synthase activity"/>
    <property type="evidence" value="ECO:0007669"/>
    <property type="project" value="UniProtKB-EC"/>
</dbReference>
<dbReference type="GO" id="GO:0031119">
    <property type="term" value="P:tRNA pseudouridine synthesis"/>
    <property type="evidence" value="ECO:0007669"/>
    <property type="project" value="UniProtKB-UniRule"/>
</dbReference>
<dbReference type="CDD" id="cd02570">
    <property type="entry name" value="PseudoU_synth_EcTruA"/>
    <property type="match status" value="1"/>
</dbReference>
<dbReference type="FunFam" id="3.30.70.580:FF:000001">
    <property type="entry name" value="tRNA pseudouridine synthase A"/>
    <property type="match status" value="1"/>
</dbReference>
<dbReference type="Gene3D" id="3.30.70.660">
    <property type="entry name" value="Pseudouridine synthase I, catalytic domain, C-terminal subdomain"/>
    <property type="match status" value="1"/>
</dbReference>
<dbReference type="Gene3D" id="3.30.70.580">
    <property type="entry name" value="Pseudouridine synthase I, catalytic domain, N-terminal subdomain"/>
    <property type="match status" value="1"/>
</dbReference>
<dbReference type="HAMAP" id="MF_00171">
    <property type="entry name" value="TruA"/>
    <property type="match status" value="1"/>
</dbReference>
<dbReference type="InterPro" id="IPR020103">
    <property type="entry name" value="PsdUridine_synth_cat_dom_sf"/>
</dbReference>
<dbReference type="InterPro" id="IPR001406">
    <property type="entry name" value="PsdUridine_synth_TruA"/>
</dbReference>
<dbReference type="InterPro" id="IPR020097">
    <property type="entry name" value="PsdUridine_synth_TruA_a/b_dom"/>
</dbReference>
<dbReference type="InterPro" id="IPR020095">
    <property type="entry name" value="PsdUridine_synth_TruA_C"/>
</dbReference>
<dbReference type="InterPro" id="IPR020094">
    <property type="entry name" value="TruA/RsuA/RluB/E/F_N"/>
</dbReference>
<dbReference type="NCBIfam" id="TIGR00071">
    <property type="entry name" value="hisT_truA"/>
    <property type="match status" value="1"/>
</dbReference>
<dbReference type="PANTHER" id="PTHR11142">
    <property type="entry name" value="PSEUDOURIDYLATE SYNTHASE"/>
    <property type="match status" value="1"/>
</dbReference>
<dbReference type="PANTHER" id="PTHR11142:SF0">
    <property type="entry name" value="TRNA PSEUDOURIDINE SYNTHASE-LIKE 1"/>
    <property type="match status" value="1"/>
</dbReference>
<dbReference type="Pfam" id="PF01416">
    <property type="entry name" value="PseudoU_synth_1"/>
    <property type="match status" value="2"/>
</dbReference>
<dbReference type="PIRSF" id="PIRSF001430">
    <property type="entry name" value="tRNA_psdUrid_synth"/>
    <property type="match status" value="1"/>
</dbReference>
<dbReference type="SUPFAM" id="SSF55120">
    <property type="entry name" value="Pseudouridine synthase"/>
    <property type="match status" value="1"/>
</dbReference>
<feature type="chain" id="PRO_1000017135" description="tRNA pseudouridine synthase A">
    <location>
        <begin position="1"/>
        <end position="264"/>
    </location>
</feature>
<feature type="active site" description="Nucleophile" evidence="1">
    <location>
        <position position="51"/>
    </location>
</feature>
<feature type="binding site" evidence="1">
    <location>
        <position position="109"/>
    </location>
    <ligand>
        <name>substrate</name>
    </ligand>
</feature>
<reference key="1">
    <citation type="journal article" date="2008" name="Appl. Environ. Microbiol.">
        <title>The genome of Polaromonas sp. strain JS666: insights into the evolution of a hydrocarbon- and xenobiotic-degrading bacterium, and features of relevance to biotechnology.</title>
        <authorList>
            <person name="Mattes T.E."/>
            <person name="Alexander A.K."/>
            <person name="Richardson P.M."/>
            <person name="Munk A.C."/>
            <person name="Han C.S."/>
            <person name="Stothard P."/>
            <person name="Coleman N.V."/>
        </authorList>
    </citation>
    <scope>NUCLEOTIDE SEQUENCE [LARGE SCALE GENOMIC DNA]</scope>
    <source>
        <strain>JS666 / ATCC BAA-500</strain>
    </source>
</reference>
<comment type="function">
    <text evidence="1">Formation of pseudouridine at positions 38, 39 and 40 in the anticodon stem and loop of transfer RNAs.</text>
</comment>
<comment type="catalytic activity">
    <reaction evidence="1">
        <text>uridine(38/39/40) in tRNA = pseudouridine(38/39/40) in tRNA</text>
        <dbReference type="Rhea" id="RHEA:22376"/>
        <dbReference type="Rhea" id="RHEA-COMP:10085"/>
        <dbReference type="Rhea" id="RHEA-COMP:10087"/>
        <dbReference type="ChEBI" id="CHEBI:65314"/>
        <dbReference type="ChEBI" id="CHEBI:65315"/>
        <dbReference type="EC" id="5.4.99.12"/>
    </reaction>
</comment>
<comment type="subunit">
    <text evidence="1">Homodimer.</text>
</comment>
<comment type="similarity">
    <text evidence="1">Belongs to the tRNA pseudouridine synthase TruA family.</text>
</comment>
<organism>
    <name type="scientific">Polaromonas sp. (strain JS666 / ATCC BAA-500)</name>
    <dbReference type="NCBI Taxonomy" id="296591"/>
    <lineage>
        <taxon>Bacteria</taxon>
        <taxon>Pseudomonadati</taxon>
        <taxon>Pseudomonadota</taxon>
        <taxon>Betaproteobacteria</taxon>
        <taxon>Burkholderiales</taxon>
        <taxon>Comamonadaceae</taxon>
        <taxon>Polaromonas</taxon>
    </lineage>
</organism>